<organism>
    <name type="scientific">Cyanophora paradoxa</name>
    <dbReference type="NCBI Taxonomy" id="2762"/>
    <lineage>
        <taxon>Eukaryota</taxon>
        <taxon>Glaucocystophyceae</taxon>
        <taxon>Cyanophoraceae</taxon>
        <taxon>Cyanophora</taxon>
    </lineage>
</organism>
<evidence type="ECO:0000250" key="1"/>
<evidence type="ECO:0000255" key="2">
    <source>
        <dbReference type="HAMAP-Rule" id="MF_00717"/>
    </source>
</evidence>
<protein>
    <recommendedName>
        <fullName evidence="2">Photosystem II reaction center protein Y</fullName>
    </recommendedName>
</protein>
<dbReference type="EMBL" id="U30821">
    <property type="protein sequence ID" value="AAA81314.1"/>
    <property type="molecule type" value="Genomic_DNA"/>
</dbReference>
<dbReference type="PIR" id="T06971">
    <property type="entry name" value="T06971"/>
</dbReference>
<dbReference type="RefSeq" id="NP_043283.1">
    <property type="nucleotide sequence ID" value="NC_001675.1"/>
</dbReference>
<dbReference type="SMR" id="P48272"/>
<dbReference type="GeneID" id="801547"/>
<dbReference type="GO" id="GO:0033115">
    <property type="term" value="C:cyanelle thylakoid membrane"/>
    <property type="evidence" value="ECO:0007669"/>
    <property type="project" value="UniProtKB-SubCell"/>
</dbReference>
<dbReference type="GO" id="GO:0009523">
    <property type="term" value="C:photosystem II"/>
    <property type="evidence" value="ECO:0007669"/>
    <property type="project" value="UniProtKB-KW"/>
</dbReference>
<dbReference type="GO" id="GO:0030145">
    <property type="term" value="F:manganese ion binding"/>
    <property type="evidence" value="ECO:0007669"/>
    <property type="project" value="InterPro"/>
</dbReference>
<dbReference type="GO" id="GO:0015979">
    <property type="term" value="P:photosynthesis"/>
    <property type="evidence" value="ECO:0007669"/>
    <property type="project" value="UniProtKB-UniRule"/>
</dbReference>
<dbReference type="HAMAP" id="MF_00717">
    <property type="entry name" value="PSII_PsbY"/>
    <property type="match status" value="1"/>
</dbReference>
<dbReference type="InterPro" id="IPR009388">
    <property type="entry name" value="PSII_PsbY"/>
</dbReference>
<dbReference type="NCBIfam" id="NF009711">
    <property type="entry name" value="PRK13240.1"/>
    <property type="match status" value="1"/>
</dbReference>
<dbReference type="Pfam" id="PF06298">
    <property type="entry name" value="PsbY"/>
    <property type="match status" value="1"/>
</dbReference>
<keyword id="KW-0194">Cyanelle</keyword>
<keyword id="KW-0472">Membrane</keyword>
<keyword id="KW-0602">Photosynthesis</keyword>
<keyword id="KW-0604">Photosystem II</keyword>
<keyword id="KW-0934">Plastid</keyword>
<keyword id="KW-0793">Thylakoid</keyword>
<keyword id="KW-0812">Transmembrane</keyword>
<keyword id="KW-1133">Transmembrane helix</keyword>
<feature type="chain" id="PRO_0000216885" description="Photosystem II reaction center protein Y">
    <location>
        <begin position="1"/>
        <end position="38"/>
    </location>
</feature>
<feature type="topological domain" description="Lumenal" evidence="2">
    <location>
        <begin position="1"/>
        <end position="4"/>
    </location>
</feature>
<feature type="transmembrane region" description="Helical" evidence="2">
    <location>
        <begin position="5"/>
        <end position="23"/>
    </location>
</feature>
<feature type="topological domain" description="Stromal" evidence="2">
    <location>
        <begin position="24"/>
        <end position="38"/>
    </location>
</feature>
<comment type="function">
    <text evidence="2">Loosely associated component of the core of photosystem II (PSII), it is not always seen in crystals. PSII is a light-driven water plastoquinone oxidoreductase, using light energy to abstract electrons from H(2)O, generating a proton gradient subsequently used for ATP formation.</text>
</comment>
<comment type="subunit">
    <text evidence="2">PSII is composed of 1 copy each of membrane proteins PsbA, PsbB, PsbC, PsbD, PsbE, PsbF, PsbH, PsbI, PsbJ, PsbK, PsbL, PsbM, PsbT, PsbX, PsbY, PsbZ, Psb30/Ycf12, at least 3 peripheral proteins of the oxygen-evolving complex and a large number of cofactors. It forms dimeric complexes.</text>
</comment>
<comment type="subcellular location">
    <subcellularLocation>
        <location evidence="1">Plastid</location>
        <location evidence="1">Cyanelle thylakoid membrane</location>
        <topology evidence="2">Single-pass membrane protein</topology>
    </subcellularLocation>
</comment>
<comment type="similarity">
    <text evidence="2">Belongs to the PsbY family.</text>
</comment>
<reference key="1">
    <citation type="journal article" date="1995" name="Plant Mol. Biol. Rep.">
        <title>Nucleotide sequence of the cyanelle DNA from Cyanophora paradoxa.</title>
        <authorList>
            <person name="Stirewalt V.L."/>
            <person name="Michalowski C.B."/>
            <person name="Loeffelhardt W."/>
            <person name="Bohnert H.J."/>
            <person name="Bryant D.A."/>
        </authorList>
    </citation>
    <scope>NUCLEOTIDE SEQUENCE [LARGE SCALE GENOMIC DNA]</scope>
    <source>
        <strain>UTEX LB 555 / Pringsheim</strain>
    </source>
</reference>
<reference key="2">
    <citation type="book" date="1997" name="Eukaryotism and symbiosis">
        <title>The complete sequence of the cyanelle genome of Cyanophora paradoxa: the genetic complexity of a primitive plastid.</title>
        <editorList>
            <person name="Schenk H.E.A."/>
            <person name="Herrmann R."/>
            <person name="Jeon K.W."/>
            <person name="Mueller N.E."/>
            <person name="Schwemmler W."/>
        </editorList>
        <authorList>
            <person name="Loeffelhardt W."/>
            <person name="Stirewalt V.L."/>
            <person name="Michalowski C.B."/>
            <person name="Annarella M."/>
            <person name="Farley J.Y."/>
            <person name="Schluchter W.M."/>
            <person name="Chung S."/>
            <person name="Newmann-Spallart C."/>
            <person name="Steiner J.M."/>
            <person name="Jakowitsch J."/>
            <person name="Bohnert H.J."/>
            <person name="Bryant D.A."/>
        </authorList>
    </citation>
    <scope>NUCLEOTIDE SEQUENCE [LARGE SCALE GENOMIC DNA]</scope>
    <source>
        <strain>UTEX LB 555 / Pringsheim</strain>
    </source>
</reference>
<accession>P48272</accession>
<proteinExistence type="inferred from homology"/>
<sequence length="38" mass="4240">MSMRLVVVLLPLGIALGWAVYNIGKLAIEQWRRTGSKV</sequence>
<gene>
    <name evidence="2" type="primary">psbY</name>
    <name type="synonym">ycf32</name>
</gene>
<name>PSBY_CYAPA</name>
<geneLocation type="cyanelle"/>